<sequence>MATGKSGGSSAEDLGHHAGYYRLPNTHDARLFYFFFESRGSKGEDDPVVIWLTGGPGCSSELALFYENGPFHIADNMSLVWNDFGWDQESNLIYVDQPTGTGFSYSSNPRDTRHDEAGVSNDLYAFLQAFFTEHPNFAKNDFYITGESYAGHYIPAFASRVYKGNKNSEGIHINLKGFAIGNGLTDPAIQYKAYTDYSLDMGLITKSQFNRINKIVPTCELAIKLCGTSGTISCLGAYVVCNLIFSSIETIIGKKNYYDIRKPCVGSLCYDLSNMEKFLQLKSVRESLGVGDIQFVSCSPTVYQAMLLDWMRNLEVGIPELLENDIKVLIYAGEYDLICNWLGNSRWVNSMEWSGKEAFVSSSEEPFTVDGKEAGILKSYGPLSFLKVHDAGHMVPMDQPKVALEMLMRWTSGNLSNASSSFQRLDFTM</sequence>
<organism>
    <name type="scientific">Oryza sativa subsp. japonica</name>
    <name type="common">Rice</name>
    <dbReference type="NCBI Taxonomy" id="39947"/>
    <lineage>
        <taxon>Eukaryota</taxon>
        <taxon>Viridiplantae</taxon>
        <taxon>Streptophyta</taxon>
        <taxon>Embryophyta</taxon>
        <taxon>Tracheophyta</taxon>
        <taxon>Spermatophyta</taxon>
        <taxon>Magnoliopsida</taxon>
        <taxon>Liliopsida</taxon>
        <taxon>Poales</taxon>
        <taxon>Poaceae</taxon>
        <taxon>BOP clade</taxon>
        <taxon>Oryzoideae</taxon>
        <taxon>Oryzeae</taxon>
        <taxon>Oryzinae</taxon>
        <taxon>Oryza</taxon>
        <taxon>Oryza sativa</taxon>
    </lineage>
</organism>
<reference key="1">
    <citation type="journal article" date="1994" name="Plant Physiol.">
        <title>Organ-specific and hormone-dependent expression of genes for serine carboxypeptidases during development and following germination of rice grains.</title>
        <authorList>
            <person name="Washio K."/>
            <person name="Ishikawa K."/>
        </authorList>
    </citation>
    <scope>NUCLEOTIDE SEQUENCE [MRNA]</scope>
    <scope>TISSUE SPECIFICITY</scope>
    <scope>DEVELOPMENTAL STAGE</scope>
    <source>
        <strain>cv. Yukihikari</strain>
    </source>
</reference>
<reference key="2">
    <citation type="journal article" date="2005" name="Nature">
        <title>The map-based sequence of the rice genome.</title>
        <authorList>
            <consortium name="International rice genome sequencing project (IRGSP)"/>
        </authorList>
    </citation>
    <scope>NUCLEOTIDE SEQUENCE [LARGE SCALE GENOMIC DNA]</scope>
    <source>
        <strain>cv. Nipponbare</strain>
    </source>
</reference>
<reference key="3">
    <citation type="journal article" date="2013" name="Rice">
        <title>Improvement of the Oryza sativa Nipponbare reference genome using next generation sequence and optical map data.</title>
        <authorList>
            <person name="Kawahara Y."/>
            <person name="de la Bastide M."/>
            <person name="Hamilton J.P."/>
            <person name="Kanamori H."/>
            <person name="McCombie W.R."/>
            <person name="Ouyang S."/>
            <person name="Schwartz D.C."/>
            <person name="Tanaka T."/>
            <person name="Wu J."/>
            <person name="Zhou S."/>
            <person name="Childs K.L."/>
            <person name="Davidson R.M."/>
            <person name="Lin H."/>
            <person name="Quesada-Ocampo L."/>
            <person name="Vaillancourt B."/>
            <person name="Sakai H."/>
            <person name="Lee S.S."/>
            <person name="Kim J."/>
            <person name="Numa H."/>
            <person name="Itoh T."/>
            <person name="Buell C.R."/>
            <person name="Matsumoto T."/>
        </authorList>
    </citation>
    <scope>GENOME REANNOTATION</scope>
    <source>
        <strain>cv. Nipponbare</strain>
    </source>
</reference>
<reference key="4">
    <citation type="journal article" date="2003" name="Science">
        <title>Collection, mapping, and annotation of over 28,000 cDNA clones from japonica rice.</title>
        <authorList>
            <consortium name="The rice full-length cDNA consortium"/>
        </authorList>
    </citation>
    <scope>NUCLEOTIDE SEQUENCE [LARGE SCALE MRNA]</scope>
    <source>
        <strain>cv. Nipponbare</strain>
    </source>
</reference>
<evidence type="ECO:0000250" key="1"/>
<evidence type="ECO:0000255" key="2"/>
<evidence type="ECO:0000269" key="3">
    <source>
    </source>
</evidence>
<evidence type="ECO:0000305" key="4"/>
<comment type="tissue specificity">
    <text evidence="3">Abundant in germinated embryos composed of leaf, root, and scutellum.</text>
</comment>
<comment type="developmental stage">
    <text evidence="3">Expressed in immature grains. Decreases during maturation and then increases again during germination.</text>
</comment>
<comment type="similarity">
    <text evidence="4">Belongs to the peptidase S10 family.</text>
</comment>
<comment type="sequence caution" evidence="4">
    <conflict type="frameshift">
        <sequence resource="EMBL" id="AK120117"/>
    </conflict>
</comment>
<gene>
    <name type="primary">CBP31</name>
    <name type="ordered locus">Os07g0479300</name>
    <name type="ordered locus">LOC_Os07g29620</name>
    <name type="ORF">P0434A03.108-1</name>
    <name type="ORF">P0640E12.147-1</name>
</gene>
<dbReference type="EC" id="3.4.16.-"/>
<dbReference type="EMBL" id="D17587">
    <property type="protein sequence ID" value="BAA04511.1"/>
    <property type="molecule type" value="mRNA"/>
</dbReference>
<dbReference type="EMBL" id="AP004299">
    <property type="protein sequence ID" value="BAC45113.1"/>
    <property type="molecule type" value="Genomic_DNA"/>
</dbReference>
<dbReference type="EMBL" id="AP005261">
    <property type="protein sequence ID" value="BAD31260.1"/>
    <property type="molecule type" value="Genomic_DNA"/>
</dbReference>
<dbReference type="EMBL" id="AP014963">
    <property type="status" value="NOT_ANNOTATED_CDS"/>
    <property type="molecule type" value="Genomic_DNA"/>
</dbReference>
<dbReference type="EMBL" id="AK120117">
    <property type="status" value="NOT_ANNOTATED_CDS"/>
    <property type="molecule type" value="mRNA"/>
</dbReference>
<dbReference type="PIR" id="T03607">
    <property type="entry name" value="T03607"/>
</dbReference>
<dbReference type="SMR" id="P52712"/>
<dbReference type="FunCoup" id="P52712">
    <property type="interactions" value="326"/>
</dbReference>
<dbReference type="ESTHER" id="orysa-cbpx">
    <property type="family name" value="Carboxypeptidase_S10"/>
</dbReference>
<dbReference type="MEROPS" id="S10.009"/>
<dbReference type="GlyCosmos" id="P52712">
    <property type="glycosylation" value="3 sites, No reported glycans"/>
</dbReference>
<dbReference type="PaxDb" id="39947-P52712"/>
<dbReference type="eggNOG" id="KOG1282">
    <property type="taxonomic scope" value="Eukaryota"/>
</dbReference>
<dbReference type="InParanoid" id="P52712"/>
<dbReference type="Proteomes" id="UP000000763">
    <property type="component" value="Chromosome 7"/>
</dbReference>
<dbReference type="Proteomes" id="UP000059680">
    <property type="component" value="Chromosome 7"/>
</dbReference>
<dbReference type="GO" id="GO:0005789">
    <property type="term" value="C:endoplasmic reticulum membrane"/>
    <property type="evidence" value="ECO:0000250"/>
    <property type="project" value="Gramene"/>
</dbReference>
<dbReference type="GO" id="GO:0005777">
    <property type="term" value="C:peroxisome"/>
    <property type="evidence" value="ECO:0000250"/>
    <property type="project" value="Gramene"/>
</dbReference>
<dbReference type="GO" id="GO:0005773">
    <property type="term" value="C:vacuole"/>
    <property type="evidence" value="ECO:0000318"/>
    <property type="project" value="GO_Central"/>
</dbReference>
<dbReference type="GO" id="GO:0004185">
    <property type="term" value="F:serine-type carboxypeptidase activity"/>
    <property type="evidence" value="ECO:0000318"/>
    <property type="project" value="GO_Central"/>
</dbReference>
<dbReference type="GO" id="GO:0006508">
    <property type="term" value="P:proteolysis"/>
    <property type="evidence" value="ECO:0007669"/>
    <property type="project" value="UniProtKB-KW"/>
</dbReference>
<dbReference type="FunFam" id="3.40.50.1820:FF:000060">
    <property type="entry name" value="Carboxypeptidase"/>
    <property type="match status" value="1"/>
</dbReference>
<dbReference type="Gene3D" id="3.40.50.1820">
    <property type="entry name" value="alpha/beta hydrolase"/>
    <property type="match status" value="1"/>
</dbReference>
<dbReference type="InterPro" id="IPR029058">
    <property type="entry name" value="AB_hydrolase_fold"/>
</dbReference>
<dbReference type="InterPro" id="IPR001563">
    <property type="entry name" value="Peptidase_S10"/>
</dbReference>
<dbReference type="InterPro" id="IPR033124">
    <property type="entry name" value="Ser_caboxypep_his_AS"/>
</dbReference>
<dbReference type="InterPro" id="IPR018202">
    <property type="entry name" value="Ser_caboxypep_ser_AS"/>
</dbReference>
<dbReference type="PANTHER" id="PTHR11802:SF446">
    <property type="entry name" value="SERINE CARBOXYPEPTIDASE-LIKE 49"/>
    <property type="match status" value="1"/>
</dbReference>
<dbReference type="PANTHER" id="PTHR11802">
    <property type="entry name" value="SERINE PROTEASE FAMILY S10 SERINE CARBOXYPEPTIDASE"/>
    <property type="match status" value="1"/>
</dbReference>
<dbReference type="Pfam" id="PF00450">
    <property type="entry name" value="Peptidase_S10"/>
    <property type="match status" value="1"/>
</dbReference>
<dbReference type="PRINTS" id="PR00724">
    <property type="entry name" value="CRBOXYPTASEC"/>
</dbReference>
<dbReference type="SUPFAM" id="SSF53474">
    <property type="entry name" value="alpha/beta-Hydrolases"/>
    <property type="match status" value="1"/>
</dbReference>
<dbReference type="PROSITE" id="PS00560">
    <property type="entry name" value="CARBOXYPEPT_SER_HIS"/>
    <property type="match status" value="1"/>
</dbReference>
<dbReference type="PROSITE" id="PS00131">
    <property type="entry name" value="CARBOXYPEPT_SER_SER"/>
    <property type="match status" value="1"/>
</dbReference>
<proteinExistence type="evidence at transcript level"/>
<name>CBPX_ORYSJ</name>
<accession>P52712</accession>
<accession>Q8GVT1</accession>
<keyword id="KW-0121">Carboxypeptidase</keyword>
<keyword id="KW-1015">Disulfide bond</keyword>
<keyword id="KW-0325">Glycoprotein</keyword>
<keyword id="KW-0378">Hydrolase</keyword>
<keyword id="KW-0645">Protease</keyword>
<keyword id="KW-1185">Reference proteome</keyword>
<keyword id="KW-0732">Signal</keyword>
<protein>
    <recommendedName>
        <fullName>Serine carboxypeptidase-like</fullName>
        <ecNumber>3.4.16.-</ecNumber>
    </recommendedName>
</protein>
<feature type="signal peptide" evidence="2">
    <location>
        <begin position="1"/>
        <end status="unknown"/>
    </location>
</feature>
<feature type="chain" id="PRO_0000004335" description="Serine carboxypeptidase-like">
    <location>
        <begin status="unknown"/>
        <end position="429"/>
    </location>
</feature>
<feature type="active site" evidence="1">
    <location>
        <position position="148"/>
    </location>
</feature>
<feature type="active site" evidence="1">
    <location>
        <position position="336"/>
    </location>
</feature>
<feature type="active site" evidence="1">
    <location>
        <position position="393"/>
    </location>
</feature>
<feature type="binding site" evidence="1">
    <location>
        <position position="339"/>
    </location>
    <ligand>
        <name>substrate</name>
    </ligand>
</feature>
<feature type="glycosylation site" description="N-linked (GlcNAc...) asparagine" evidence="2">
    <location>
        <position position="76"/>
    </location>
</feature>
<feature type="glycosylation site" description="N-linked (GlcNAc...) asparagine" evidence="2">
    <location>
        <position position="414"/>
    </location>
</feature>
<feature type="glycosylation site" description="N-linked (GlcNAc...) asparagine" evidence="2">
    <location>
        <position position="417"/>
    </location>
</feature>
<feature type="disulfide bond" evidence="1">
    <location>
        <begin position="58"/>
        <end position="298"/>
    </location>
</feature>
<feature type="disulfide bond" evidence="1">
    <location>
        <begin position="226"/>
        <end position="241"/>
    </location>
</feature>
<feature type="disulfide bond" evidence="1">
    <location>
        <begin position="264"/>
        <end position="269"/>
    </location>
</feature>
<feature type="sequence conflict" description="In Ref. 1; BAA04511." evidence="4" ref="1">
    <original>F</original>
    <variation>C</variation>
    <location>
        <position position="245"/>
    </location>
</feature>